<dbReference type="EC" id="2.8.1.1" evidence="1"/>
<dbReference type="EMBL" id="CP001113">
    <property type="protein sequence ID" value="ACF61840.1"/>
    <property type="molecule type" value="Genomic_DNA"/>
</dbReference>
<dbReference type="RefSeq" id="WP_000434523.1">
    <property type="nucleotide sequence ID" value="NZ_CCMR01000004.1"/>
</dbReference>
<dbReference type="SMR" id="B4SVM2"/>
<dbReference type="KEGG" id="see:SNSL254_A3792"/>
<dbReference type="HOGENOM" id="CLU_089574_14_0_6"/>
<dbReference type="Proteomes" id="UP000008824">
    <property type="component" value="Chromosome"/>
</dbReference>
<dbReference type="GO" id="GO:0005737">
    <property type="term" value="C:cytoplasm"/>
    <property type="evidence" value="ECO:0007669"/>
    <property type="project" value="UniProtKB-SubCell"/>
</dbReference>
<dbReference type="GO" id="GO:0004792">
    <property type="term" value="F:thiosulfate-cyanide sulfurtransferase activity"/>
    <property type="evidence" value="ECO:0007669"/>
    <property type="project" value="UniProtKB-UniRule"/>
</dbReference>
<dbReference type="GO" id="GO:0006071">
    <property type="term" value="P:glycerol metabolic process"/>
    <property type="evidence" value="ECO:0007669"/>
    <property type="project" value="UniProtKB-UniRule"/>
</dbReference>
<dbReference type="CDD" id="cd01444">
    <property type="entry name" value="GlpE_ST"/>
    <property type="match status" value="1"/>
</dbReference>
<dbReference type="FunFam" id="3.40.250.10:FF:000007">
    <property type="entry name" value="Thiosulfate sulfurtransferase GlpE"/>
    <property type="match status" value="1"/>
</dbReference>
<dbReference type="Gene3D" id="3.40.250.10">
    <property type="entry name" value="Rhodanese-like domain"/>
    <property type="match status" value="1"/>
</dbReference>
<dbReference type="HAMAP" id="MF_01009">
    <property type="entry name" value="Thiosulf_sulfurtr"/>
    <property type="match status" value="1"/>
</dbReference>
<dbReference type="InterPro" id="IPR050229">
    <property type="entry name" value="GlpE_sulfurtransferase"/>
</dbReference>
<dbReference type="InterPro" id="IPR001763">
    <property type="entry name" value="Rhodanese-like_dom"/>
</dbReference>
<dbReference type="InterPro" id="IPR036873">
    <property type="entry name" value="Rhodanese-like_dom_sf"/>
</dbReference>
<dbReference type="InterPro" id="IPR023695">
    <property type="entry name" value="Thiosulf_sulfurTrfase"/>
</dbReference>
<dbReference type="NCBIfam" id="NF001195">
    <property type="entry name" value="PRK00162.1"/>
    <property type="match status" value="1"/>
</dbReference>
<dbReference type="PANTHER" id="PTHR43031">
    <property type="entry name" value="FAD-DEPENDENT OXIDOREDUCTASE"/>
    <property type="match status" value="1"/>
</dbReference>
<dbReference type="PANTHER" id="PTHR43031:SF6">
    <property type="entry name" value="THIOSULFATE SULFURTRANSFERASE GLPE"/>
    <property type="match status" value="1"/>
</dbReference>
<dbReference type="Pfam" id="PF00581">
    <property type="entry name" value="Rhodanese"/>
    <property type="match status" value="1"/>
</dbReference>
<dbReference type="SMART" id="SM00450">
    <property type="entry name" value="RHOD"/>
    <property type="match status" value="1"/>
</dbReference>
<dbReference type="SUPFAM" id="SSF52821">
    <property type="entry name" value="Rhodanese/Cell cycle control phosphatase"/>
    <property type="match status" value="1"/>
</dbReference>
<dbReference type="PROSITE" id="PS50206">
    <property type="entry name" value="RHODANESE_3"/>
    <property type="match status" value="1"/>
</dbReference>
<name>GLPE_SALNS</name>
<proteinExistence type="inferred from homology"/>
<sequence length="108" mass="11973">MEQFECITVEEAYQKLHQGAAVLVDIRDPQSYAMGHAPQAFHLTNDTLGAFMREHGFDTAVMVMCYHGNSSKGAAQYLLQQGYDAVYSIDGGFEAWHRRFPADVANGA</sequence>
<evidence type="ECO:0000255" key="1">
    <source>
        <dbReference type="HAMAP-Rule" id="MF_01009"/>
    </source>
</evidence>
<feature type="chain" id="PRO_1000190108" description="Thiosulfate sulfurtransferase GlpE">
    <location>
        <begin position="1"/>
        <end position="108"/>
    </location>
</feature>
<feature type="domain" description="Rhodanese" evidence="1">
    <location>
        <begin position="17"/>
        <end position="105"/>
    </location>
</feature>
<feature type="active site" description="Cysteine persulfide intermediate" evidence="1">
    <location>
        <position position="65"/>
    </location>
</feature>
<accession>B4SVM2</accession>
<gene>
    <name evidence="1" type="primary">glpE</name>
    <name type="ordered locus">SNSL254_A3792</name>
</gene>
<reference key="1">
    <citation type="journal article" date="2011" name="J. Bacteriol.">
        <title>Comparative genomics of 28 Salmonella enterica isolates: evidence for CRISPR-mediated adaptive sublineage evolution.</title>
        <authorList>
            <person name="Fricke W.F."/>
            <person name="Mammel M.K."/>
            <person name="McDermott P.F."/>
            <person name="Tartera C."/>
            <person name="White D.G."/>
            <person name="Leclerc J.E."/>
            <person name="Ravel J."/>
            <person name="Cebula T.A."/>
        </authorList>
    </citation>
    <scope>NUCLEOTIDE SEQUENCE [LARGE SCALE GENOMIC DNA]</scope>
    <source>
        <strain>SL254</strain>
    </source>
</reference>
<organism>
    <name type="scientific">Salmonella newport (strain SL254)</name>
    <dbReference type="NCBI Taxonomy" id="423368"/>
    <lineage>
        <taxon>Bacteria</taxon>
        <taxon>Pseudomonadati</taxon>
        <taxon>Pseudomonadota</taxon>
        <taxon>Gammaproteobacteria</taxon>
        <taxon>Enterobacterales</taxon>
        <taxon>Enterobacteriaceae</taxon>
        <taxon>Salmonella</taxon>
    </lineage>
</organism>
<comment type="function">
    <text evidence="1">Transferase that catalyzes the transfer of sulfur from thiosulfate to thiophilic acceptors such as cyanide or dithiols. May function in a CysM-independent thiosulfate assimilation pathway by catalyzing the conversion of thiosulfate to sulfite, which can then be used for L-cysteine biosynthesis.</text>
</comment>
<comment type="catalytic activity">
    <reaction evidence="1">
        <text>thiosulfate + hydrogen cyanide = thiocyanate + sulfite + 2 H(+)</text>
        <dbReference type="Rhea" id="RHEA:16881"/>
        <dbReference type="ChEBI" id="CHEBI:15378"/>
        <dbReference type="ChEBI" id="CHEBI:17359"/>
        <dbReference type="ChEBI" id="CHEBI:18022"/>
        <dbReference type="ChEBI" id="CHEBI:18407"/>
        <dbReference type="ChEBI" id="CHEBI:33542"/>
        <dbReference type="EC" id="2.8.1.1"/>
    </reaction>
</comment>
<comment type="catalytic activity">
    <reaction evidence="1">
        <text>thiosulfate + [thioredoxin]-dithiol = [thioredoxin]-disulfide + hydrogen sulfide + sulfite + 2 H(+)</text>
        <dbReference type="Rhea" id="RHEA:83859"/>
        <dbReference type="Rhea" id="RHEA-COMP:10698"/>
        <dbReference type="Rhea" id="RHEA-COMP:10700"/>
        <dbReference type="ChEBI" id="CHEBI:15378"/>
        <dbReference type="ChEBI" id="CHEBI:17359"/>
        <dbReference type="ChEBI" id="CHEBI:29919"/>
        <dbReference type="ChEBI" id="CHEBI:29950"/>
        <dbReference type="ChEBI" id="CHEBI:33542"/>
        <dbReference type="ChEBI" id="CHEBI:50058"/>
    </reaction>
</comment>
<comment type="subcellular location">
    <subcellularLocation>
        <location evidence="1">Cytoplasm</location>
    </subcellularLocation>
</comment>
<comment type="similarity">
    <text evidence="1">Belongs to the GlpE family.</text>
</comment>
<protein>
    <recommendedName>
        <fullName evidence="1">Thiosulfate sulfurtransferase GlpE</fullName>
        <ecNumber evidence="1">2.8.1.1</ecNumber>
    </recommendedName>
</protein>
<keyword id="KW-0963">Cytoplasm</keyword>
<keyword id="KW-0808">Transferase</keyword>